<comment type="function">
    <text evidence="1">Involved in peptide bond synthesis. Stimulates efficient translation and peptide-bond synthesis on native or reconstituted 70S ribosomes in vitro. Probably functions indirectly by altering the affinity of the ribosome for aminoacyl-tRNA, thus increasing their reactivity as acceptors for peptidyl transferase.</text>
</comment>
<comment type="pathway">
    <text evidence="1">Protein biosynthesis; polypeptide chain elongation.</text>
</comment>
<comment type="subcellular location">
    <subcellularLocation>
        <location evidence="1">Cytoplasm</location>
    </subcellularLocation>
</comment>
<comment type="similarity">
    <text evidence="1">Belongs to the elongation factor P family.</text>
</comment>
<reference key="1">
    <citation type="journal article" date="2003" name="Proc. Natl. Acad. Sci. U.S.A.">
        <title>The complete genome sequence of the carcinogenic bacterium Helicobacter hepaticus.</title>
        <authorList>
            <person name="Suerbaum S."/>
            <person name="Josenhans C."/>
            <person name="Sterzenbach T."/>
            <person name="Drescher B."/>
            <person name="Brandt P."/>
            <person name="Bell M."/>
            <person name="Droege M."/>
            <person name="Fartmann B."/>
            <person name="Fischer H.-P."/>
            <person name="Ge Z."/>
            <person name="Hoerster A."/>
            <person name="Holland R."/>
            <person name="Klein K."/>
            <person name="Koenig J."/>
            <person name="Macko L."/>
            <person name="Mendz G.L."/>
            <person name="Nyakatura G."/>
            <person name="Schauer D.B."/>
            <person name="Shen Z."/>
            <person name="Weber J."/>
            <person name="Frosch M."/>
            <person name="Fox J.G."/>
        </authorList>
    </citation>
    <scope>NUCLEOTIDE SEQUENCE [LARGE SCALE GENOMIC DNA]</scope>
    <source>
        <strain>ATCC 51449 / 3B1</strain>
    </source>
</reference>
<sequence>MAIGMSELKKGLKIEIDGIPYRITEYQHVKPGKGAAFVRAKIKSFLDGKVIEKTFHAGDKCEEPNLQEKTMQFLYHDGGAFQFMDTTTYEQIALSDDQVGDVAKWIIDGLNVQILFHNEKAISVDVPLVVELTITETAPNFKGDTSSGGKKPATLETGAVVQVPFHVLEGEKIKVNTETGEYLEKVK</sequence>
<dbReference type="EMBL" id="AE017125">
    <property type="protein sequence ID" value="AAP76705.1"/>
    <property type="molecule type" value="Genomic_DNA"/>
</dbReference>
<dbReference type="RefSeq" id="WP_011114951.1">
    <property type="nucleotide sequence ID" value="NC_004917.1"/>
</dbReference>
<dbReference type="SMR" id="Q7VJY4"/>
<dbReference type="STRING" id="235279.HH_0108"/>
<dbReference type="KEGG" id="hhe:HH_0108"/>
<dbReference type="eggNOG" id="COG0231">
    <property type="taxonomic scope" value="Bacteria"/>
</dbReference>
<dbReference type="HOGENOM" id="CLU_074944_0_1_7"/>
<dbReference type="OrthoDB" id="9801844at2"/>
<dbReference type="UniPathway" id="UPA00345"/>
<dbReference type="Proteomes" id="UP000002495">
    <property type="component" value="Chromosome"/>
</dbReference>
<dbReference type="GO" id="GO:0005737">
    <property type="term" value="C:cytoplasm"/>
    <property type="evidence" value="ECO:0007669"/>
    <property type="project" value="UniProtKB-SubCell"/>
</dbReference>
<dbReference type="GO" id="GO:0003746">
    <property type="term" value="F:translation elongation factor activity"/>
    <property type="evidence" value="ECO:0007669"/>
    <property type="project" value="UniProtKB-UniRule"/>
</dbReference>
<dbReference type="GO" id="GO:0043043">
    <property type="term" value="P:peptide biosynthetic process"/>
    <property type="evidence" value="ECO:0007669"/>
    <property type="project" value="InterPro"/>
</dbReference>
<dbReference type="CDD" id="cd04470">
    <property type="entry name" value="S1_EF-P_repeat_1"/>
    <property type="match status" value="1"/>
</dbReference>
<dbReference type="CDD" id="cd05794">
    <property type="entry name" value="S1_EF-P_repeat_2"/>
    <property type="match status" value="1"/>
</dbReference>
<dbReference type="FunFam" id="2.30.30.30:FF:000003">
    <property type="entry name" value="Elongation factor P"/>
    <property type="match status" value="1"/>
</dbReference>
<dbReference type="FunFam" id="2.40.50.140:FF:000004">
    <property type="entry name" value="Elongation factor P"/>
    <property type="match status" value="1"/>
</dbReference>
<dbReference type="FunFam" id="2.40.50.140:FF:000009">
    <property type="entry name" value="Elongation factor P"/>
    <property type="match status" value="1"/>
</dbReference>
<dbReference type="Gene3D" id="2.30.30.30">
    <property type="match status" value="1"/>
</dbReference>
<dbReference type="Gene3D" id="2.40.50.140">
    <property type="entry name" value="Nucleic acid-binding proteins"/>
    <property type="match status" value="2"/>
</dbReference>
<dbReference type="HAMAP" id="MF_00141">
    <property type="entry name" value="EF_P"/>
    <property type="match status" value="1"/>
</dbReference>
<dbReference type="InterPro" id="IPR015365">
    <property type="entry name" value="Elong-fact-P_C"/>
</dbReference>
<dbReference type="InterPro" id="IPR012340">
    <property type="entry name" value="NA-bd_OB-fold"/>
</dbReference>
<dbReference type="InterPro" id="IPR014722">
    <property type="entry name" value="Rib_uL2_dom2"/>
</dbReference>
<dbReference type="InterPro" id="IPR020599">
    <property type="entry name" value="Transl_elong_fac_P/YeiP"/>
</dbReference>
<dbReference type="InterPro" id="IPR013185">
    <property type="entry name" value="Transl_elong_KOW-like"/>
</dbReference>
<dbReference type="InterPro" id="IPR001059">
    <property type="entry name" value="Transl_elong_P/YeiP_cen"/>
</dbReference>
<dbReference type="InterPro" id="IPR013852">
    <property type="entry name" value="Transl_elong_P/YeiP_CS"/>
</dbReference>
<dbReference type="InterPro" id="IPR011768">
    <property type="entry name" value="Transl_elongation_fac_P"/>
</dbReference>
<dbReference type="InterPro" id="IPR008991">
    <property type="entry name" value="Translation_prot_SH3-like_sf"/>
</dbReference>
<dbReference type="NCBIfam" id="TIGR00038">
    <property type="entry name" value="efp"/>
    <property type="match status" value="1"/>
</dbReference>
<dbReference type="NCBIfam" id="NF001810">
    <property type="entry name" value="PRK00529.1"/>
    <property type="match status" value="1"/>
</dbReference>
<dbReference type="PANTHER" id="PTHR30053">
    <property type="entry name" value="ELONGATION FACTOR P"/>
    <property type="match status" value="1"/>
</dbReference>
<dbReference type="PANTHER" id="PTHR30053:SF12">
    <property type="entry name" value="ELONGATION FACTOR P (EF-P) FAMILY PROTEIN"/>
    <property type="match status" value="1"/>
</dbReference>
<dbReference type="Pfam" id="PF01132">
    <property type="entry name" value="EFP"/>
    <property type="match status" value="1"/>
</dbReference>
<dbReference type="Pfam" id="PF08207">
    <property type="entry name" value="EFP_N"/>
    <property type="match status" value="1"/>
</dbReference>
<dbReference type="Pfam" id="PF09285">
    <property type="entry name" value="Elong-fact-P_C"/>
    <property type="match status" value="1"/>
</dbReference>
<dbReference type="PIRSF" id="PIRSF005901">
    <property type="entry name" value="EF-P"/>
    <property type="match status" value="1"/>
</dbReference>
<dbReference type="SMART" id="SM01185">
    <property type="entry name" value="EFP"/>
    <property type="match status" value="1"/>
</dbReference>
<dbReference type="SMART" id="SM00841">
    <property type="entry name" value="Elong-fact-P_C"/>
    <property type="match status" value="1"/>
</dbReference>
<dbReference type="SUPFAM" id="SSF50249">
    <property type="entry name" value="Nucleic acid-binding proteins"/>
    <property type="match status" value="2"/>
</dbReference>
<dbReference type="SUPFAM" id="SSF50104">
    <property type="entry name" value="Translation proteins SH3-like domain"/>
    <property type="match status" value="1"/>
</dbReference>
<dbReference type="PROSITE" id="PS01275">
    <property type="entry name" value="EFP"/>
    <property type="match status" value="1"/>
</dbReference>
<keyword id="KW-0963">Cytoplasm</keyword>
<keyword id="KW-0251">Elongation factor</keyword>
<keyword id="KW-0648">Protein biosynthesis</keyword>
<keyword id="KW-1185">Reference proteome</keyword>
<proteinExistence type="inferred from homology"/>
<protein>
    <recommendedName>
        <fullName evidence="1">Elongation factor P</fullName>
        <shortName evidence="1">EF-P</shortName>
    </recommendedName>
</protein>
<accession>Q7VJY4</accession>
<gene>
    <name evidence="1" type="primary">efp</name>
    <name type="ordered locus">HH_0108</name>
</gene>
<name>EFP_HELHP</name>
<organism>
    <name type="scientific">Helicobacter hepaticus (strain ATCC 51449 / 3B1)</name>
    <dbReference type="NCBI Taxonomy" id="235279"/>
    <lineage>
        <taxon>Bacteria</taxon>
        <taxon>Pseudomonadati</taxon>
        <taxon>Campylobacterota</taxon>
        <taxon>Epsilonproteobacteria</taxon>
        <taxon>Campylobacterales</taxon>
        <taxon>Helicobacteraceae</taxon>
        <taxon>Helicobacter</taxon>
    </lineage>
</organism>
<feature type="chain" id="PRO_0000094259" description="Elongation factor P">
    <location>
        <begin position="1"/>
        <end position="187"/>
    </location>
</feature>
<evidence type="ECO:0000255" key="1">
    <source>
        <dbReference type="HAMAP-Rule" id="MF_00141"/>
    </source>
</evidence>